<sequence length="1088" mass="123454">MATHLSHPQRRPPLLRQAVKIRRRRVRDLQDPPPQATPEVQVQSHHFSPEERDLLYEEALYTVLHRLGQPEPNHVKEASELLCYLQEAFQVQPEEHQQMLQRVRELEKPIFCLKATVKQAKGILGKDVSGFSDPYCLLGIEQKVGVPEGSPVSRRRQKAVVRHTIPEEETHRTQVKTQTLNPVWDETFILEFEDITNASFHLDMWDLDTVESVRHKLGELTDLHGLRRIFKEARKDKGQDDFLGNVMLRLQDLRCREDQWFPLEPCTETYPDRGQCHLQFQFIHKRRATVASRSQPSYTVHFHLLQQLVSHEVTQHQAGGTSWGRIAESQAVTILFLHATQKDLSDFHQSMAQWLAYSRLYQSLEFPSSCLLHPITSIEYQWIQGRLKAEQREELATSFTSLLAYGLSLIRKFRSVFPLSVSDSPSRLQSLLRVLVQMCKMKAFGELCPDSAPLPQLVSEALRMGTVEWFHLMQQHHQPMVQGILEAGKALLSLVQDVMGDLYQCRRTWNKIFHNVLKIDLFTMAFLELQWLVAKRVQDHTAAVGDLVSPDVGESLFQLYVSLREFCQLGPSDSHEVLALDGFHRWFQSAIPSWLQRTYSVALERVQRAVQMDSLVPLGELTKHSTSAVDLSTCFAQISHTARQLDWPDPEEAFMITVKFVEDTCRLALVYCSLIKARARELSAVQKDQSQAADMLCVVVNNVERLRLIIDKLPTQLAWEALEQRVGAVLEQGQLQNTLHTQLQGALAGLGHEIRTGVRTLAEQLEVGIATHIQKLIDAKGSILPEDAILPLMKFLEVKLCYMNTNLVQENFSSLLTLLWTHTLTVLVEAAASHRNSSLASSRLKVALQNLEICFHAEGCGLPPEALHTDTFLALQSDLELQAASSRELIQKYFRSRIQQQAETTSERLGAVTVKASYRASEQKLHVELLSASSLLPLDSNGSSDPFVQLTLEPRHEFPELAPRETQKHKKELHPLFDETFEFLVPAEPCQKDGACLLLTVLDHDRLGADDLEGEAFLPLCRVPGLTGCVEPGEAPQMRLPLTYPAPNGDPILRLLESRKGDREAQAFVKLRRQRAKQASQHAPATEP</sequence>
<reference key="1">
    <citation type="journal article" date="2000" name="Biochem. J.">
        <title>Definition of Munc13-homology-domains and characterization of a novel ubiquitously expressed Munc13-isoform.</title>
        <authorList>
            <person name="Koch H."/>
            <person name="Hofmann K."/>
            <person name="Brose N."/>
        </authorList>
    </citation>
    <scope>NUCLEOTIDE SEQUENCE [MRNA]</scope>
    <scope>TISSUE SPECIFICITY</scope>
    <source>
        <strain>Sprague-Dawley</strain>
        <tissue>Lung</tissue>
    </source>
</reference>
<reference key="2">
    <citation type="journal article" date="2012" name="Nat. Commun.">
        <title>Quantitative maps of protein phosphorylation sites across 14 different rat organs and tissues.</title>
        <authorList>
            <person name="Lundby A."/>
            <person name="Secher A."/>
            <person name="Lage K."/>
            <person name="Nordsborg N.B."/>
            <person name="Dmytriyev A."/>
            <person name="Lundby C."/>
            <person name="Olsen J.V."/>
        </authorList>
    </citation>
    <scope>PHOSPHORYLATION [LARGE SCALE ANALYSIS] AT SER-150</scope>
    <scope>IDENTIFICATION BY MASS SPECTROMETRY [LARGE SCALE ANALYSIS]</scope>
</reference>
<keyword id="KW-0106">Calcium</keyword>
<keyword id="KW-0963">Cytoplasm</keyword>
<keyword id="KW-0967">Endosome</keyword>
<keyword id="KW-0268">Exocytosis</keyword>
<keyword id="KW-0458">Lysosome</keyword>
<keyword id="KW-0472">Membrane</keyword>
<keyword id="KW-0479">Metal-binding</keyword>
<keyword id="KW-0597">Phosphoprotein</keyword>
<keyword id="KW-1185">Reference proteome</keyword>
<keyword id="KW-0677">Repeat</keyword>
<accession>Q9R189</accession>
<protein>
    <recommendedName>
        <fullName>Protein unc-13 homolog D</fullName>
    </recommendedName>
    <alternativeName>
        <fullName>Munc13-4</fullName>
    </alternativeName>
</protein>
<dbReference type="EMBL" id="AF159356">
    <property type="protein sequence ID" value="AAD44333.1"/>
    <property type="molecule type" value="mRNA"/>
</dbReference>
<dbReference type="RefSeq" id="NP_620199.1">
    <property type="nucleotide sequence ID" value="NM_138844.1"/>
</dbReference>
<dbReference type="SMR" id="Q9R189"/>
<dbReference type="FunCoup" id="Q9R189">
    <property type="interactions" value="166"/>
</dbReference>
<dbReference type="STRING" id="10116.ENSRNOP00000010466"/>
<dbReference type="GlyGen" id="Q9R189">
    <property type="glycosylation" value="1 site"/>
</dbReference>
<dbReference type="iPTMnet" id="Q9R189"/>
<dbReference type="PhosphoSitePlus" id="Q9R189"/>
<dbReference type="PaxDb" id="10116-ENSRNOP00000010466"/>
<dbReference type="GeneID" id="192177"/>
<dbReference type="KEGG" id="rno:192177"/>
<dbReference type="AGR" id="RGD:628593"/>
<dbReference type="CTD" id="201294"/>
<dbReference type="RGD" id="628593">
    <property type="gene designation" value="Unc13d"/>
</dbReference>
<dbReference type="eggNOG" id="KOG1328">
    <property type="taxonomic scope" value="Eukaryota"/>
</dbReference>
<dbReference type="InParanoid" id="Q9R189"/>
<dbReference type="PhylomeDB" id="Q9R189"/>
<dbReference type="Reactome" id="R-RNO-6798695">
    <property type="pathway name" value="Neutrophil degranulation"/>
</dbReference>
<dbReference type="PRO" id="PR:Q9R189"/>
<dbReference type="Proteomes" id="UP000002494">
    <property type="component" value="Unplaced"/>
</dbReference>
<dbReference type="GO" id="GO:0070382">
    <property type="term" value="C:exocytic vesicle"/>
    <property type="evidence" value="ECO:0000266"/>
    <property type="project" value="RGD"/>
</dbReference>
<dbReference type="GO" id="GO:0005770">
    <property type="term" value="C:late endosome"/>
    <property type="evidence" value="ECO:0007669"/>
    <property type="project" value="UniProtKB-SubCell"/>
</dbReference>
<dbReference type="GO" id="GO:0005764">
    <property type="term" value="C:lysosome"/>
    <property type="evidence" value="ECO:0000266"/>
    <property type="project" value="RGD"/>
</dbReference>
<dbReference type="GO" id="GO:0016020">
    <property type="term" value="C:membrane"/>
    <property type="evidence" value="ECO:0007669"/>
    <property type="project" value="UniProtKB-SubCell"/>
</dbReference>
<dbReference type="GO" id="GO:0055037">
    <property type="term" value="C:recycling endosome"/>
    <property type="evidence" value="ECO:0007669"/>
    <property type="project" value="UniProtKB-SubCell"/>
</dbReference>
<dbReference type="GO" id="GO:0033093">
    <property type="term" value="C:Weibel-Palade body"/>
    <property type="evidence" value="ECO:0000266"/>
    <property type="project" value="RGD"/>
</dbReference>
<dbReference type="GO" id="GO:0046872">
    <property type="term" value="F:metal ion binding"/>
    <property type="evidence" value="ECO:0007669"/>
    <property type="project" value="UniProtKB-KW"/>
</dbReference>
<dbReference type="GO" id="GO:0031267">
    <property type="term" value="F:small GTPase binding"/>
    <property type="evidence" value="ECO:0000266"/>
    <property type="project" value="RGD"/>
</dbReference>
<dbReference type="GO" id="GO:0051607">
    <property type="term" value="P:defense response to virus"/>
    <property type="evidence" value="ECO:0000266"/>
    <property type="project" value="RGD"/>
</dbReference>
<dbReference type="GO" id="GO:0061789">
    <property type="term" value="P:dense core granule priming"/>
    <property type="evidence" value="ECO:0000316"/>
    <property type="project" value="SynGO-UCL"/>
</dbReference>
<dbReference type="GO" id="GO:0051649">
    <property type="term" value="P:establishment of localization in cell"/>
    <property type="evidence" value="ECO:0000266"/>
    <property type="project" value="RGD"/>
</dbReference>
<dbReference type="GO" id="GO:0002467">
    <property type="term" value="P:germinal center formation"/>
    <property type="evidence" value="ECO:0000266"/>
    <property type="project" value="RGD"/>
</dbReference>
<dbReference type="GO" id="GO:0002432">
    <property type="term" value="P:granuloma formation"/>
    <property type="evidence" value="ECO:0000266"/>
    <property type="project" value="RGD"/>
</dbReference>
<dbReference type="GO" id="GO:0043320">
    <property type="term" value="P:natural killer cell degranulation"/>
    <property type="evidence" value="ECO:0000266"/>
    <property type="project" value="RGD"/>
</dbReference>
<dbReference type="GO" id="GO:0006909">
    <property type="term" value="P:phagocytosis"/>
    <property type="evidence" value="ECO:0000266"/>
    <property type="project" value="RGD"/>
</dbReference>
<dbReference type="GO" id="GO:0045921">
    <property type="term" value="P:positive regulation of exocytosis"/>
    <property type="evidence" value="ECO:0000266"/>
    <property type="project" value="RGD"/>
</dbReference>
<dbReference type="GO" id="GO:1903307">
    <property type="term" value="P:positive regulation of regulated secretory pathway"/>
    <property type="evidence" value="ECO:0000266"/>
    <property type="project" value="RGD"/>
</dbReference>
<dbReference type="GO" id="GO:1900026">
    <property type="term" value="P:positive regulation of substrate adhesion-dependent cell spreading"/>
    <property type="evidence" value="ECO:0000266"/>
    <property type="project" value="RGD"/>
</dbReference>
<dbReference type="GO" id="GO:0043304">
    <property type="term" value="P:regulation of mast cell degranulation"/>
    <property type="evidence" value="ECO:0000266"/>
    <property type="project" value="RGD"/>
</dbReference>
<dbReference type="GO" id="GO:0046903">
    <property type="term" value="P:secretion"/>
    <property type="evidence" value="ECO:0000270"/>
    <property type="project" value="RGD"/>
</dbReference>
<dbReference type="CDD" id="cd08676">
    <property type="entry name" value="C2A_Munc13-like"/>
    <property type="match status" value="1"/>
</dbReference>
<dbReference type="CDD" id="cd04009">
    <property type="entry name" value="C2B_Munc13-like"/>
    <property type="match status" value="1"/>
</dbReference>
<dbReference type="FunFam" id="2.60.40.150:FF:000164">
    <property type="entry name" value="Protein unc-13 homolog D"/>
    <property type="match status" value="1"/>
</dbReference>
<dbReference type="FunFam" id="1.10.357.50:FF:000005">
    <property type="entry name" value="protein unc-13 homolog D"/>
    <property type="match status" value="1"/>
</dbReference>
<dbReference type="FunFam" id="2.60.40.150:FF:000123">
    <property type="entry name" value="protein unc-13 homolog D"/>
    <property type="match status" value="1"/>
</dbReference>
<dbReference type="Gene3D" id="1.10.357.50">
    <property type="match status" value="1"/>
</dbReference>
<dbReference type="Gene3D" id="2.60.40.150">
    <property type="entry name" value="C2 domain"/>
    <property type="match status" value="2"/>
</dbReference>
<dbReference type="InterPro" id="IPR000008">
    <property type="entry name" value="C2_dom"/>
</dbReference>
<dbReference type="InterPro" id="IPR035892">
    <property type="entry name" value="C2_domain_sf"/>
</dbReference>
<dbReference type="InterPro" id="IPR010439">
    <property type="entry name" value="MUN_dom"/>
</dbReference>
<dbReference type="InterPro" id="IPR014770">
    <property type="entry name" value="Munc13_1"/>
</dbReference>
<dbReference type="InterPro" id="IPR014772">
    <property type="entry name" value="Munc13_dom-2"/>
</dbReference>
<dbReference type="InterPro" id="IPR052095">
    <property type="entry name" value="UNC-13_domain"/>
</dbReference>
<dbReference type="PANTHER" id="PTHR45999:SF3">
    <property type="entry name" value="PROTEIN UNC-13 HOMOLOG D"/>
    <property type="match status" value="1"/>
</dbReference>
<dbReference type="PANTHER" id="PTHR45999">
    <property type="entry name" value="UNC-13-4A, ISOFORM B"/>
    <property type="match status" value="1"/>
</dbReference>
<dbReference type="Pfam" id="PF00168">
    <property type="entry name" value="C2"/>
    <property type="match status" value="2"/>
</dbReference>
<dbReference type="Pfam" id="PF06292">
    <property type="entry name" value="MUN"/>
    <property type="match status" value="1"/>
</dbReference>
<dbReference type="SMART" id="SM00239">
    <property type="entry name" value="C2"/>
    <property type="match status" value="2"/>
</dbReference>
<dbReference type="SUPFAM" id="SSF49562">
    <property type="entry name" value="C2 domain (Calcium/lipid-binding domain, CaLB)"/>
    <property type="match status" value="2"/>
</dbReference>
<dbReference type="PROSITE" id="PS50004">
    <property type="entry name" value="C2"/>
    <property type="match status" value="2"/>
</dbReference>
<dbReference type="PROSITE" id="PS51258">
    <property type="entry name" value="MHD1"/>
    <property type="match status" value="1"/>
</dbReference>
<dbReference type="PROSITE" id="PS51259">
    <property type="entry name" value="MHD2"/>
    <property type="match status" value="1"/>
</dbReference>
<proteinExistence type="evidence at protein level"/>
<evidence type="ECO:0000250" key="1"/>
<evidence type="ECO:0000250" key="2">
    <source>
        <dbReference type="UniProtKB" id="B2RUP2"/>
    </source>
</evidence>
<evidence type="ECO:0000250" key="3">
    <source>
        <dbReference type="UniProtKB" id="Q70J99"/>
    </source>
</evidence>
<evidence type="ECO:0000255" key="4">
    <source>
        <dbReference type="PROSITE-ProRule" id="PRU00041"/>
    </source>
</evidence>
<evidence type="ECO:0000255" key="5">
    <source>
        <dbReference type="PROSITE-ProRule" id="PRU00587"/>
    </source>
</evidence>
<evidence type="ECO:0000255" key="6">
    <source>
        <dbReference type="PROSITE-ProRule" id="PRU00588"/>
    </source>
</evidence>
<evidence type="ECO:0000256" key="7">
    <source>
        <dbReference type="SAM" id="MobiDB-lite"/>
    </source>
</evidence>
<evidence type="ECO:0000269" key="8">
    <source>
    </source>
</evidence>
<evidence type="ECO:0000305" key="9"/>
<evidence type="ECO:0007744" key="10">
    <source>
    </source>
</evidence>
<comment type="function">
    <text evidence="1">Plays a role in cytotoxic granule exocytosis in lymphocytes. Required for both granule maturation and granule docking and priming at the immunologic synapse. Regulates assembly of recycling and late endosomal structures, leading to the formation of an endosomal exocytic compartment that fuses with perforin-containing granules at the immunologic synapse and licences them for exocytosis. Regulates Ca(2+)-dependent secretory lysosome exocytosis in mast cells (By similarity).</text>
</comment>
<comment type="cofactor">
    <cofactor evidence="4">
        <name>Ca(2+)</name>
        <dbReference type="ChEBI" id="CHEBI:29108"/>
    </cofactor>
</comment>
<comment type="subunit">
    <text evidence="2 3">Interacts with RAB27A and DOC2A (By similarity). Interacts with RhoG; the interaction increases RhoG affinity to the membrane lipids, targets Unc13d to membrane lipids and facilitates cytotoxic granule (CG) docking to the plasma membrane (By similarity).</text>
</comment>
<comment type="subcellular location">
    <subcellularLocation>
        <location evidence="1">Cytoplasm</location>
    </subcellularLocation>
    <subcellularLocation>
        <location evidence="1">Membrane</location>
        <topology evidence="1">Peripheral membrane protein</topology>
    </subcellularLocation>
    <subcellularLocation>
        <location evidence="1">Late endosome</location>
    </subcellularLocation>
    <subcellularLocation>
        <location evidence="1">Recycling endosome</location>
    </subcellularLocation>
    <subcellularLocation>
        <location evidence="1">Lysosome</location>
    </subcellularLocation>
    <text evidence="1">Colocalizes with cytotoxic granules at the plasma membrane. Localizes to endosomal exocytic vesicles.</text>
</comment>
<comment type="tissue specificity">
    <text evidence="8">Expressed in lung bronchial epithelium goblet/mucous cells. Also expressed in spleen and testis. Expressed at very low levels in heart muscle, kidney, liver, brain and skeletal muscle.</text>
</comment>
<comment type="domain">
    <text evidence="1">The MHD1 and MHD2 domains mediate localization on recycling endosomes and lysosome.</text>
</comment>
<comment type="similarity">
    <text evidence="9">Belongs to the unc-13 family.</text>
</comment>
<name>UN13D_RAT</name>
<feature type="chain" id="PRO_0000188582" description="Protein unc-13 homolog D">
    <location>
        <begin position="1"/>
        <end position="1088"/>
    </location>
</feature>
<feature type="domain" description="C2 1" evidence="4">
    <location>
        <begin position="92"/>
        <end position="239"/>
    </location>
</feature>
<feature type="domain" description="MHD1" evidence="5">
    <location>
        <begin position="557"/>
        <end position="675"/>
    </location>
</feature>
<feature type="domain" description="MHD2" evidence="6">
    <location>
        <begin position="786"/>
        <end position="893"/>
    </location>
</feature>
<feature type="domain" description="C2 2" evidence="4">
    <location>
        <begin position="908"/>
        <end position="1033"/>
    </location>
</feature>
<feature type="region of interest" description="Disordered" evidence="7">
    <location>
        <begin position="26"/>
        <end position="46"/>
    </location>
</feature>
<feature type="region of interest" description="Interaction with RAB27A" evidence="1">
    <location>
        <begin position="240"/>
        <end position="543"/>
    </location>
</feature>
<feature type="binding site" evidence="4">
    <location>
        <position position="127"/>
    </location>
    <ligand>
        <name>Ca(2+)</name>
        <dbReference type="ChEBI" id="CHEBI:29108"/>
        <label>1</label>
    </ligand>
</feature>
<feature type="binding site" evidence="4">
    <location>
        <position position="133"/>
    </location>
    <ligand>
        <name>Ca(2+)</name>
        <dbReference type="ChEBI" id="CHEBI:29108"/>
        <label>1</label>
    </ligand>
</feature>
<feature type="binding site" evidence="4">
    <location>
        <position position="206"/>
    </location>
    <ligand>
        <name>Ca(2+)</name>
        <dbReference type="ChEBI" id="CHEBI:29108"/>
        <label>1</label>
    </ligand>
</feature>
<feature type="binding site" evidence="4">
    <location>
        <position position="208"/>
    </location>
    <ligand>
        <name>Ca(2+)</name>
        <dbReference type="ChEBI" id="CHEBI:29108"/>
        <label>1</label>
    </ligand>
</feature>
<feature type="binding site" evidence="4">
    <location>
        <position position="938"/>
    </location>
    <ligand>
        <name>Ca(2+)</name>
        <dbReference type="ChEBI" id="CHEBI:29108"/>
        <label>3</label>
    </ligand>
</feature>
<feature type="binding site" evidence="4">
    <location>
        <position position="939"/>
    </location>
    <ligand>
        <name>Ca(2+)</name>
        <dbReference type="ChEBI" id="CHEBI:29108"/>
        <label>2</label>
    </ligand>
</feature>
<feature type="binding site" evidence="4">
    <location>
        <position position="939"/>
    </location>
    <ligand>
        <name>Ca(2+)</name>
        <dbReference type="ChEBI" id="CHEBI:29108"/>
        <label>3</label>
    </ligand>
</feature>
<feature type="binding site" evidence="4">
    <location>
        <position position="945"/>
    </location>
    <ligand>
        <name>Ca(2+)</name>
        <dbReference type="ChEBI" id="CHEBI:29108"/>
        <label>2</label>
    </ligand>
</feature>
<feature type="binding site" evidence="4">
    <location>
        <position position="1003"/>
    </location>
    <ligand>
        <name>Ca(2+)</name>
        <dbReference type="ChEBI" id="CHEBI:29108"/>
        <label>2</label>
    </ligand>
</feature>
<feature type="binding site" evidence="4">
    <location>
        <position position="1003"/>
    </location>
    <ligand>
        <name>Ca(2+)</name>
        <dbReference type="ChEBI" id="CHEBI:29108"/>
        <label>3</label>
    </ligand>
</feature>
<feature type="binding site" evidence="4">
    <location>
        <position position="1005"/>
    </location>
    <ligand>
        <name>Ca(2+)</name>
        <dbReference type="ChEBI" id="CHEBI:29108"/>
        <label>2</label>
    </ligand>
</feature>
<feature type="binding site" evidence="4">
    <location>
        <position position="1005"/>
    </location>
    <ligand>
        <name>Ca(2+)</name>
        <dbReference type="ChEBI" id="CHEBI:29108"/>
        <label>3</label>
    </ligand>
</feature>
<feature type="binding site" evidence="4">
    <location>
        <position position="1011"/>
    </location>
    <ligand>
        <name>Ca(2+)</name>
        <dbReference type="ChEBI" id="CHEBI:29108"/>
        <label>3</label>
    </ligand>
</feature>
<feature type="modified residue" description="Phosphoserine" evidence="10">
    <location>
        <position position="150"/>
    </location>
</feature>
<organism>
    <name type="scientific">Rattus norvegicus</name>
    <name type="common">Rat</name>
    <dbReference type="NCBI Taxonomy" id="10116"/>
    <lineage>
        <taxon>Eukaryota</taxon>
        <taxon>Metazoa</taxon>
        <taxon>Chordata</taxon>
        <taxon>Craniata</taxon>
        <taxon>Vertebrata</taxon>
        <taxon>Euteleostomi</taxon>
        <taxon>Mammalia</taxon>
        <taxon>Eutheria</taxon>
        <taxon>Euarchontoglires</taxon>
        <taxon>Glires</taxon>
        <taxon>Rodentia</taxon>
        <taxon>Myomorpha</taxon>
        <taxon>Muroidea</taxon>
        <taxon>Muridae</taxon>
        <taxon>Murinae</taxon>
        <taxon>Rattus</taxon>
    </lineage>
</organism>
<gene>
    <name type="primary">Unc13d</name>
    <name type="synonym">Unc13h4</name>
</gene>